<feature type="chain" id="PRO_0000147640" description="Flavin-containing monooxygenase 1">
    <location>
        <begin position="1"/>
        <end position="532"/>
    </location>
</feature>
<feature type="topological domain" description="Lumenal" evidence="1">
    <location>
        <begin position="1"/>
        <end position="510"/>
    </location>
</feature>
<feature type="transmembrane region" description="Helical" evidence="5">
    <location>
        <begin position="511"/>
        <end position="531"/>
    </location>
</feature>
<feature type="topological domain" description="Cytoplasmic" evidence="1">
    <location>
        <position position="532"/>
    </location>
</feature>
<feature type="binding site" evidence="4">
    <location>
        <begin position="9"/>
        <end position="13"/>
    </location>
    <ligand>
        <name>FAD</name>
        <dbReference type="ChEBI" id="CHEBI:57692"/>
    </ligand>
</feature>
<feature type="binding site" evidence="4">
    <location>
        <position position="32"/>
    </location>
    <ligand>
        <name>FAD</name>
        <dbReference type="ChEBI" id="CHEBI:57692"/>
    </ligand>
</feature>
<feature type="binding site" evidence="4">
    <location>
        <begin position="40"/>
        <end position="41"/>
    </location>
    <ligand>
        <name>FAD</name>
        <dbReference type="ChEBI" id="CHEBI:57692"/>
    </ligand>
</feature>
<feature type="binding site" evidence="4">
    <location>
        <begin position="60"/>
        <end position="61"/>
    </location>
    <ligand>
        <name>NADP(+)</name>
        <dbReference type="ChEBI" id="CHEBI:58349"/>
    </ligand>
</feature>
<feature type="binding site" evidence="4">
    <location>
        <begin position="61"/>
        <end position="62"/>
    </location>
    <ligand>
        <name>FAD</name>
        <dbReference type="ChEBI" id="CHEBI:57692"/>
    </ligand>
</feature>
<feature type="binding site" evidence="4">
    <location>
        <begin position="195"/>
        <end position="198"/>
    </location>
    <ligand>
        <name>NADP(+)</name>
        <dbReference type="ChEBI" id="CHEBI:58349"/>
    </ligand>
</feature>
<feature type="site" description="Important for substrate binding" evidence="1">
    <location>
        <position position="208"/>
    </location>
</feature>
<organism>
    <name type="scientific">Mus musculus</name>
    <name type="common">Mouse</name>
    <dbReference type="NCBI Taxonomy" id="10090"/>
    <lineage>
        <taxon>Eukaryota</taxon>
        <taxon>Metazoa</taxon>
        <taxon>Chordata</taxon>
        <taxon>Craniata</taxon>
        <taxon>Vertebrata</taxon>
        <taxon>Euteleostomi</taxon>
        <taxon>Mammalia</taxon>
        <taxon>Eutheria</taxon>
        <taxon>Euarchontoglires</taxon>
        <taxon>Glires</taxon>
        <taxon>Rodentia</taxon>
        <taxon>Myomorpha</taxon>
        <taxon>Muroidea</taxon>
        <taxon>Muridae</taxon>
        <taxon>Murinae</taxon>
        <taxon>Mus</taxon>
        <taxon>Mus</taxon>
    </lineage>
</organism>
<evidence type="ECO:0000250" key="1">
    <source>
        <dbReference type="UniProtKB" id="P16549"/>
    </source>
</evidence>
<evidence type="ECO:0000250" key="2">
    <source>
        <dbReference type="UniProtKB" id="P36365"/>
    </source>
</evidence>
<evidence type="ECO:0000250" key="3">
    <source>
        <dbReference type="UniProtKB" id="Q01740"/>
    </source>
</evidence>
<evidence type="ECO:0000250" key="4">
    <source>
        <dbReference type="UniProtKB" id="Q9HFE4"/>
    </source>
</evidence>
<evidence type="ECO:0000255" key="5"/>
<evidence type="ECO:0000269" key="6">
    <source>
    </source>
</evidence>
<evidence type="ECO:0000269" key="7">
    <source>
    </source>
</evidence>
<evidence type="ECO:0000305" key="8"/>
<evidence type="ECO:0000305" key="9">
    <source>
    </source>
</evidence>
<evidence type="ECO:0000312" key="10">
    <source>
        <dbReference type="MGI" id="MGI:1310002"/>
    </source>
</evidence>
<protein>
    <recommendedName>
        <fullName evidence="9">Flavin-containing monooxygenase 1</fullName>
        <ecNumber evidence="2">1.14.13.148</ecNumber>
        <ecNumber evidence="6">1.14.13.8</ecNumber>
    </recommendedName>
    <alternativeName>
        <fullName evidence="9">Dimethylaniline monooxygenase [N-oxide-forming] 1</fullName>
    </alternativeName>
    <alternativeName>
        <fullName>Dimethylaniline oxidase 1</fullName>
    </alternativeName>
    <alternativeName>
        <fullName>Hepatic flavin-containing monooxygenase 1</fullName>
        <shortName>FMO 1</shortName>
    </alternativeName>
    <alternativeName>
        <fullName>Trimethylamine monooxygenase</fullName>
    </alternativeName>
</protein>
<proteinExistence type="evidence at protein level"/>
<reference key="1">
    <citation type="submission" date="1993-05" db="EMBL/GenBank/DDBJ databases">
        <authorList>
            <person name="Itoh K."/>
            <person name="Nakamura K."/>
            <person name="Kimura T."/>
            <person name="Itoh S."/>
            <person name="Kamataki T."/>
        </authorList>
    </citation>
    <scope>NUCLEOTIDE SEQUENCE [MRNA]</scope>
</reference>
<reference key="2">
    <citation type="journal article" date="1998" name="J. Biochem. Mol. Toxicol.">
        <title>Molecular cloning, sequence, and expression of mouse flavin-containing monooxygenases 1 and 5 (FMO1 and FMO5).</title>
        <authorList>
            <person name="Cherrington N.J."/>
            <person name="Falls J.G."/>
            <person name="Rose R.L."/>
            <person name="Clements K.M."/>
            <person name="Philpot R.M."/>
            <person name="Levi P.E."/>
            <person name="Hodgson E."/>
        </authorList>
    </citation>
    <scope>NUCLEOTIDE SEQUENCE [MRNA]</scope>
    <scope>FUNCTION</scope>
    <scope>COFACTOR</scope>
    <scope>TISSUE SPECIFICITY</scope>
    <source>
        <strain>CD-1</strain>
        <tissue>Liver</tissue>
    </source>
</reference>
<reference key="3">
    <citation type="journal article" date="2004" name="Genome Res.">
        <title>The status, quality, and expansion of the NIH full-length cDNA project: the Mammalian Gene Collection (MGC).</title>
        <authorList>
            <consortium name="The MGC Project Team"/>
        </authorList>
    </citation>
    <scope>NUCLEOTIDE SEQUENCE [LARGE SCALE MRNA]</scope>
    <source>
        <strain>FVB/N</strain>
        <tissue>Liver</tissue>
    </source>
</reference>
<reference key="4">
    <citation type="submission" date="2009-01" db="UniProtKB">
        <authorList>
            <person name="Lubec G."/>
            <person name="Sunyer B."/>
            <person name="Chen W.-Q."/>
        </authorList>
    </citation>
    <scope>PROTEIN SEQUENCE OF 297-307</scope>
    <scope>IDENTIFICATION BY MASS SPECTROMETRY</scope>
    <source>
        <strain>OF1</strain>
        <tissue>Hippocampus</tissue>
    </source>
</reference>
<reference key="5">
    <citation type="journal article" date="2010" name="Cell">
        <title>A tissue-specific atlas of mouse protein phosphorylation and expression.</title>
        <authorList>
            <person name="Huttlin E.L."/>
            <person name="Jedrychowski M.P."/>
            <person name="Elias J.E."/>
            <person name="Goswami T."/>
            <person name="Rad R."/>
            <person name="Beausoleil S.A."/>
            <person name="Villen J."/>
            <person name="Haas W."/>
            <person name="Sowa M.E."/>
            <person name="Gygi S.P."/>
        </authorList>
    </citation>
    <scope>IDENTIFICATION BY MASS SPECTROMETRY [LARGE SCALE ANALYSIS]</scope>
    <source>
        <tissue>Brown adipose tissue</tissue>
        <tissue>Heart</tissue>
        <tissue>Kidney</tissue>
        <tissue>Liver</tissue>
        <tissue>Lung</tissue>
    </source>
</reference>
<reference key="6">
    <citation type="journal article" date="2020" name="Drug Metab. Dispos.">
        <title>Flavin-Containing Monooxygenase 1 Catalyzes the Production of Taurine from Hypotaurine.</title>
        <authorList>
            <person name="Veeravalli S."/>
            <person name="Phillips I.R."/>
            <person name="Freire R.T."/>
            <person name="Varshavi D."/>
            <person name="Everett J.R."/>
            <person name="Shephard E.A."/>
        </authorList>
    </citation>
    <scope>FUNCTION</scope>
    <scope>CATALYTIC ACTIVITY</scope>
</reference>
<gene>
    <name evidence="10" type="primary">Fmo1</name>
    <name type="synonym">Fmo-1</name>
</gene>
<sequence length="532" mass="59915">MVKRVAIVGAGVSGLASIKCCLEEGLEPTCFERSSDLGGLWRFTEHVEEGRASLYKSVVSNSSREMSCYPDFPFPEDYPNFVPNSLFLEYLKLYSTQFNLQRCIYFNTKVCSITKRPDFAVSGQWEVVTVTNGKQNSAIFDAVMVCTGFLTNPHLPLDSFPGILTFKGEYFHSRQYKHPDIFKDKRVLVVGMGNSGTDIAVEASHLAKKVFLSTTGGAWVISRVFDSGYPWDMIFMTRFQNMLRNLLPTPIVSWLISKKMNSWFNHVNYGVAPEDRTQLREPVLNDELPGRIITGKVFIKPSIKEVKENSVVFNNTPKEEPIDIIVFATGYTFAFPFLDESVVKVEDGQASLYKYIFPAHLPKPTLAVIGLIKPLGSMVPTGETQARWVVQVLKGATTLPPPSVMMEEVNERKKNKHSGFGLCYCKALQTDYITYIDDLLTSINAKPDLRAMLLTDPRLALSIFFGPCTPYHFRLTGPGKWEGARKAILTQWDRTVKVTKTRTIQESPSSFETLLKLFSFLALLIAVFLIFL</sequence>
<keyword id="KW-0903">Direct protein sequencing</keyword>
<keyword id="KW-0256">Endoplasmic reticulum</keyword>
<keyword id="KW-0274">FAD</keyword>
<keyword id="KW-0285">Flavoprotein</keyword>
<keyword id="KW-0472">Membrane</keyword>
<keyword id="KW-0503">Monooxygenase</keyword>
<keyword id="KW-0521">NADP</keyword>
<keyword id="KW-0560">Oxidoreductase</keyword>
<keyword id="KW-1185">Reference proteome</keyword>
<keyword id="KW-0812">Transmembrane</keyword>
<keyword id="KW-1133">Transmembrane helix</keyword>
<accession>P50285</accession>
<name>FMO1_MOUSE</name>
<dbReference type="EC" id="1.14.13.148" evidence="2"/>
<dbReference type="EC" id="1.14.13.8" evidence="6"/>
<dbReference type="EMBL" id="D16215">
    <property type="protein sequence ID" value="BAA03745.1"/>
    <property type="molecule type" value="mRNA"/>
</dbReference>
<dbReference type="EMBL" id="U87456">
    <property type="protein sequence ID" value="AAB47569.1"/>
    <property type="molecule type" value="mRNA"/>
</dbReference>
<dbReference type="EMBL" id="BC011229">
    <property type="protein sequence ID" value="AAH11229.1"/>
    <property type="molecule type" value="mRNA"/>
</dbReference>
<dbReference type="CCDS" id="CCDS15424.1"/>
<dbReference type="PIR" id="B61243">
    <property type="entry name" value="B61243"/>
</dbReference>
<dbReference type="RefSeq" id="NP_001317220.1">
    <property type="nucleotide sequence ID" value="NM_001330291.2"/>
</dbReference>
<dbReference type="RefSeq" id="NP_001407099.1">
    <property type="nucleotide sequence ID" value="NM_001420170.1"/>
</dbReference>
<dbReference type="RefSeq" id="NP_001407100.1">
    <property type="nucleotide sequence ID" value="NM_001420171.1"/>
</dbReference>
<dbReference type="RefSeq" id="NP_034361.1">
    <property type="nucleotide sequence ID" value="NM_010231.4"/>
</dbReference>
<dbReference type="RefSeq" id="XP_006496726.1">
    <property type="nucleotide sequence ID" value="XM_006496663.3"/>
</dbReference>
<dbReference type="SMR" id="P50285"/>
<dbReference type="FunCoup" id="P50285">
    <property type="interactions" value="945"/>
</dbReference>
<dbReference type="STRING" id="10090.ENSMUSP00000037259"/>
<dbReference type="GlyGen" id="P50285">
    <property type="glycosylation" value="1 site, 1 O-linked glycan (1 site)"/>
</dbReference>
<dbReference type="iPTMnet" id="P50285"/>
<dbReference type="PhosphoSitePlus" id="P50285"/>
<dbReference type="SwissPalm" id="P50285"/>
<dbReference type="jPOST" id="P50285"/>
<dbReference type="PaxDb" id="10090-ENSMUSP00000037259"/>
<dbReference type="PeptideAtlas" id="P50285"/>
<dbReference type="ProteomicsDB" id="267488"/>
<dbReference type="Antibodypedia" id="20550">
    <property type="antibodies" value="84 antibodies from 22 providers"/>
</dbReference>
<dbReference type="DNASU" id="14261"/>
<dbReference type="Ensembl" id="ENSMUST00000046049.14">
    <property type="protein sequence ID" value="ENSMUSP00000037259.8"/>
    <property type="gene ID" value="ENSMUSG00000040181.15"/>
</dbReference>
<dbReference type="GeneID" id="14261"/>
<dbReference type="KEGG" id="mmu:14261"/>
<dbReference type="UCSC" id="uc007dgx.1">
    <property type="organism name" value="mouse"/>
</dbReference>
<dbReference type="AGR" id="MGI:1310002"/>
<dbReference type="CTD" id="2326"/>
<dbReference type="MGI" id="MGI:1310002">
    <property type="gene designation" value="Fmo1"/>
</dbReference>
<dbReference type="VEuPathDB" id="HostDB:ENSMUSG00000040181"/>
<dbReference type="eggNOG" id="KOG1399">
    <property type="taxonomic scope" value="Eukaryota"/>
</dbReference>
<dbReference type="GeneTree" id="ENSGT00940000160945"/>
<dbReference type="HOGENOM" id="CLU_006909_8_2_1"/>
<dbReference type="InParanoid" id="P50285"/>
<dbReference type="OMA" id="VMIKEVN"/>
<dbReference type="OrthoDB" id="66881at2759"/>
<dbReference type="PhylomeDB" id="P50285"/>
<dbReference type="TreeFam" id="TF105285"/>
<dbReference type="BRENDA" id="1.14.13.8">
    <property type="organism ID" value="3474"/>
</dbReference>
<dbReference type="Reactome" id="R-MMU-1614558">
    <property type="pathway name" value="Degradation of cysteine and homocysteine"/>
</dbReference>
<dbReference type="Reactome" id="R-MMU-217271">
    <property type="pathway name" value="FMO oxidises nucleophiles"/>
</dbReference>
<dbReference type="BioGRID-ORCS" id="14261">
    <property type="hits" value="5 hits in 78 CRISPR screens"/>
</dbReference>
<dbReference type="ChiTaRS" id="Fmo1">
    <property type="organism name" value="mouse"/>
</dbReference>
<dbReference type="PRO" id="PR:P50285"/>
<dbReference type="Proteomes" id="UP000000589">
    <property type="component" value="Chromosome 1"/>
</dbReference>
<dbReference type="RNAct" id="P50285">
    <property type="molecule type" value="protein"/>
</dbReference>
<dbReference type="Bgee" id="ENSMUSG00000040181">
    <property type="expression patterns" value="Expressed in right kidney and 201 other cell types or tissues"/>
</dbReference>
<dbReference type="ExpressionAtlas" id="P50285">
    <property type="expression patterns" value="baseline and differential"/>
</dbReference>
<dbReference type="GO" id="GO:0005789">
    <property type="term" value="C:endoplasmic reticulum membrane"/>
    <property type="evidence" value="ECO:0000250"/>
    <property type="project" value="UniProtKB"/>
</dbReference>
<dbReference type="GO" id="GO:0050660">
    <property type="term" value="F:flavin adenine dinucleotide binding"/>
    <property type="evidence" value="ECO:0007669"/>
    <property type="project" value="InterPro"/>
</dbReference>
<dbReference type="GO" id="GO:0047822">
    <property type="term" value="F:hypotaurine monooxygenase activity"/>
    <property type="evidence" value="ECO:0000315"/>
    <property type="project" value="UniProtKB"/>
</dbReference>
<dbReference type="GO" id="GO:0004497">
    <property type="term" value="F:monooxygenase activity"/>
    <property type="evidence" value="ECO:0000315"/>
    <property type="project" value="MGI"/>
</dbReference>
<dbReference type="GO" id="GO:0004499">
    <property type="term" value="F:N,N-dimethylaniline monooxygenase activity"/>
    <property type="evidence" value="ECO:0007669"/>
    <property type="project" value="Ensembl"/>
</dbReference>
<dbReference type="GO" id="GO:0050661">
    <property type="term" value="F:NADP binding"/>
    <property type="evidence" value="ECO:0007669"/>
    <property type="project" value="InterPro"/>
</dbReference>
<dbReference type="GO" id="GO:0034899">
    <property type="term" value="F:trimethylamine monooxygenase activity"/>
    <property type="evidence" value="ECO:0000250"/>
    <property type="project" value="UniProtKB"/>
</dbReference>
<dbReference type="GO" id="GO:0097009">
    <property type="term" value="P:energy homeostasis"/>
    <property type="evidence" value="ECO:0000316"/>
    <property type="project" value="MGI"/>
</dbReference>
<dbReference type="GO" id="GO:0046322">
    <property type="term" value="P:negative regulation of fatty acid oxidation"/>
    <property type="evidence" value="ECO:0000316"/>
    <property type="project" value="MGI"/>
</dbReference>
<dbReference type="GO" id="GO:0032496">
    <property type="term" value="P:response to lipopolysaccharide"/>
    <property type="evidence" value="ECO:0007669"/>
    <property type="project" value="Ensembl"/>
</dbReference>
<dbReference type="GO" id="GO:0042412">
    <property type="term" value="P:taurine biosynthetic process"/>
    <property type="evidence" value="ECO:0000315"/>
    <property type="project" value="UniProtKB"/>
</dbReference>
<dbReference type="GO" id="GO:0009404">
    <property type="term" value="P:toxin metabolic process"/>
    <property type="evidence" value="ECO:0007669"/>
    <property type="project" value="Ensembl"/>
</dbReference>
<dbReference type="GO" id="GO:0006805">
    <property type="term" value="P:xenobiotic metabolic process"/>
    <property type="evidence" value="ECO:0000315"/>
    <property type="project" value="MGI"/>
</dbReference>
<dbReference type="FunFam" id="3.50.50.60:FF:000159">
    <property type="entry name" value="Dimethylaniline monooxygenase [N-oxide-forming]"/>
    <property type="match status" value="1"/>
</dbReference>
<dbReference type="Gene3D" id="3.50.50.60">
    <property type="entry name" value="FAD/NAD(P)-binding domain"/>
    <property type="match status" value="1"/>
</dbReference>
<dbReference type="InterPro" id="IPR036188">
    <property type="entry name" value="FAD/NAD-bd_sf"/>
</dbReference>
<dbReference type="InterPro" id="IPR000960">
    <property type="entry name" value="Flavin_mOase"/>
</dbReference>
<dbReference type="InterPro" id="IPR020946">
    <property type="entry name" value="Flavin_mOase-like"/>
</dbReference>
<dbReference type="InterPro" id="IPR002253">
    <property type="entry name" value="Flavin_mOase_1"/>
</dbReference>
<dbReference type="InterPro" id="IPR050346">
    <property type="entry name" value="FMO-like"/>
</dbReference>
<dbReference type="PANTHER" id="PTHR23023">
    <property type="entry name" value="DIMETHYLANILINE MONOOXYGENASE"/>
    <property type="match status" value="1"/>
</dbReference>
<dbReference type="Pfam" id="PF00743">
    <property type="entry name" value="FMO-like"/>
    <property type="match status" value="1"/>
</dbReference>
<dbReference type="PIRSF" id="PIRSF000332">
    <property type="entry name" value="FMO"/>
    <property type="match status" value="1"/>
</dbReference>
<dbReference type="PRINTS" id="PR00370">
    <property type="entry name" value="FMOXYGENASE"/>
</dbReference>
<dbReference type="PRINTS" id="PR01121">
    <property type="entry name" value="FMOXYGENASE1"/>
</dbReference>
<dbReference type="SUPFAM" id="SSF51905">
    <property type="entry name" value="FAD/NAD(P)-binding domain"/>
    <property type="match status" value="2"/>
</dbReference>
<comment type="function">
    <text evidence="2 6 7">Broad spectrum monooxygenase that catalyzes the oxygenation of a wide variety of nitrogen- and sulfur-containing compounds including xenobiotics (PubMed:32156684, PubMed:9580872). Catalyzes the S-oxygenation of hypotaurine to produce taurine, an organic osmolyte involved in cell volume regulation as well as a variety of cytoprotective and developmental processes (PubMed:32156684). In vitro, catalyzes the N-oxygenation of trimethylamine (TMA) to produce trimethylamine N-oxide (TMAO) and could therefore participate to the detoxification of this compound that is generated by the action of gut microbiota from dietary precursors such as choline, choline containing compounds, betaine or L-carnitine (By similarity).</text>
</comment>
<comment type="catalytic activity">
    <reaction evidence="6">
        <text>hypotaurine + NADPH + O2 + H(+) = taurine + NADP(+) + H2O</text>
        <dbReference type="Rhea" id="RHEA:69819"/>
        <dbReference type="ChEBI" id="CHEBI:15377"/>
        <dbReference type="ChEBI" id="CHEBI:15378"/>
        <dbReference type="ChEBI" id="CHEBI:15379"/>
        <dbReference type="ChEBI" id="CHEBI:57783"/>
        <dbReference type="ChEBI" id="CHEBI:57853"/>
        <dbReference type="ChEBI" id="CHEBI:58349"/>
        <dbReference type="ChEBI" id="CHEBI:507393"/>
        <dbReference type="EC" id="1.14.13.8"/>
    </reaction>
    <physiologicalReaction direction="left-to-right" evidence="6">
        <dbReference type="Rhea" id="RHEA:69820"/>
    </physiologicalReaction>
</comment>
<comment type="catalytic activity">
    <reaction evidence="3">
        <text>hypotaurine + NADH + O2 + H(+) = taurine + NAD(+) + H2O</text>
        <dbReference type="Rhea" id="RHEA:74111"/>
        <dbReference type="ChEBI" id="CHEBI:15377"/>
        <dbReference type="ChEBI" id="CHEBI:15378"/>
        <dbReference type="ChEBI" id="CHEBI:15379"/>
        <dbReference type="ChEBI" id="CHEBI:57540"/>
        <dbReference type="ChEBI" id="CHEBI:57853"/>
        <dbReference type="ChEBI" id="CHEBI:57945"/>
        <dbReference type="ChEBI" id="CHEBI:507393"/>
        <dbReference type="EC" id="1.14.13.8"/>
    </reaction>
    <physiologicalReaction direction="left-to-right" evidence="3">
        <dbReference type="Rhea" id="RHEA:74112"/>
    </physiologicalReaction>
</comment>
<comment type="catalytic activity">
    <reaction evidence="2">
        <text>trimethylamine + NADPH + O2 = trimethylamine N-oxide + NADP(+) + H2O</text>
        <dbReference type="Rhea" id="RHEA:31979"/>
        <dbReference type="ChEBI" id="CHEBI:15377"/>
        <dbReference type="ChEBI" id="CHEBI:15379"/>
        <dbReference type="ChEBI" id="CHEBI:15724"/>
        <dbReference type="ChEBI" id="CHEBI:57783"/>
        <dbReference type="ChEBI" id="CHEBI:58349"/>
        <dbReference type="ChEBI" id="CHEBI:58389"/>
        <dbReference type="EC" id="1.14.13.148"/>
    </reaction>
    <physiologicalReaction direction="left-to-right" evidence="2">
        <dbReference type="Rhea" id="RHEA:31980"/>
    </physiologicalReaction>
</comment>
<comment type="catalytic activity">
    <reaction evidence="2">
        <text>N,N-dimethylaniline + NADPH + O2 + H(+) = N,N-dimethylaniline N-oxide + NADP(+) + H2O</text>
        <dbReference type="Rhea" id="RHEA:24468"/>
        <dbReference type="ChEBI" id="CHEBI:15377"/>
        <dbReference type="ChEBI" id="CHEBI:15378"/>
        <dbReference type="ChEBI" id="CHEBI:15379"/>
        <dbReference type="ChEBI" id="CHEBI:16269"/>
        <dbReference type="ChEBI" id="CHEBI:17735"/>
        <dbReference type="ChEBI" id="CHEBI:57783"/>
        <dbReference type="ChEBI" id="CHEBI:58349"/>
        <dbReference type="EC" id="1.14.13.8"/>
    </reaction>
    <physiologicalReaction direction="left-to-right" evidence="2">
        <dbReference type="Rhea" id="RHEA:24469"/>
    </physiologicalReaction>
</comment>
<comment type="cofactor">
    <cofactor evidence="7">
        <name>FAD</name>
        <dbReference type="ChEBI" id="CHEBI:57692"/>
    </cofactor>
</comment>
<comment type="subcellular location">
    <subcellularLocation>
        <location evidence="2">Endoplasmic reticulum membrane</location>
        <topology evidence="5">Single-pass membrane protein</topology>
    </subcellularLocation>
</comment>
<comment type="tissue specificity">
    <text evidence="7">Liver.</text>
</comment>
<comment type="similarity">
    <text evidence="8">Belongs to the FMO family.</text>
</comment>